<organism>
    <name type="scientific">Mycobacterium bovis (strain ATCC BAA-935 / AF2122/97)</name>
    <dbReference type="NCBI Taxonomy" id="233413"/>
    <lineage>
        <taxon>Bacteria</taxon>
        <taxon>Bacillati</taxon>
        <taxon>Actinomycetota</taxon>
        <taxon>Actinomycetes</taxon>
        <taxon>Mycobacteriales</taxon>
        <taxon>Mycobacteriaceae</taxon>
        <taxon>Mycobacterium</taxon>
        <taxon>Mycobacterium tuberculosis complex</taxon>
    </lineage>
</organism>
<feature type="chain" id="PRO_0000103824" description="Uncharacterized protein Mb1389c">
    <location>
        <begin position="1"/>
        <end position="623"/>
    </location>
</feature>
<feature type="domain" description="GAF">
    <location>
        <begin position="28"/>
        <end position="171"/>
    </location>
</feature>
<feature type="domain" description="GGDEF" evidence="2">
    <location>
        <begin position="212"/>
        <end position="345"/>
    </location>
</feature>
<feature type="domain" description="EAL" evidence="1">
    <location>
        <begin position="354"/>
        <end position="609"/>
    </location>
</feature>
<accession>P64826</accession>
<accession>A0A1R3XY44</accession>
<accession>Q11024</accession>
<accession>X2BHP2</accession>
<gene>
    <name type="ordered locus">BQ2027_MB1389C</name>
</gene>
<sequence length="623" mass="67653">MCNDTATPQLEELVTTVANQLMTVDAATSAEVSQRVLAYLVEQLGVDVSFLRHNDRDRRATRLVAEWPPRLNIPDPDPLRLIYFADADPVFALCEHAKEPLVFRPEPATEDYQRLIEEARGVPVTSAAAVPLVSGEITTGLLGFIKFGDRKWHEAELNALMTIATLFAQVQARVAAEARLRYLADHDDLTGLHNRRALLQHLDQRLAPGQPGPVAALFLDLDRLKAINDYLGHAAGDQFIHVFAQRIGDALVGESLIARLGGDEFVLIPASPMSADAAQPLAERLRDQLKDHVAIGGEVLTRTVSIGVASGTPGQHTPSDLLRRADQAALAAKHAGGDSVAIFTADMSVSGELRNDIELHLRRGIESDALRLVYLPEVDLRTGDIVGTEALVRWQHPTRGLLAPGCFIPVAESINLAGELDRWVLRRACNEFSEWQSAGLGHDALLRINVSAGQLVTGGFVDFVADTIGQHGLDASSVCLEITENVVVQDLHTARATLARLKEVGVHIAIDDFGTGYSAISLLQTLPIDTLKIDKTFVRQLGTNTSDLVIVRGIMTLAEGFQLDVVAEGVETEAAARILLDQRCYRAQGFLFSRPVPGEAMRHMLSARRLPPTCIPATDPALS</sequence>
<evidence type="ECO:0000255" key="1">
    <source>
        <dbReference type="PROSITE-ProRule" id="PRU00074"/>
    </source>
</evidence>
<evidence type="ECO:0000255" key="2">
    <source>
        <dbReference type="PROSITE-ProRule" id="PRU00095"/>
    </source>
</evidence>
<reference key="1">
    <citation type="journal article" date="2003" name="Proc. Natl. Acad. Sci. U.S.A.">
        <title>The complete genome sequence of Mycobacterium bovis.</title>
        <authorList>
            <person name="Garnier T."/>
            <person name="Eiglmeier K."/>
            <person name="Camus J.-C."/>
            <person name="Medina N."/>
            <person name="Mansoor H."/>
            <person name="Pryor M."/>
            <person name="Duthoy S."/>
            <person name="Grondin S."/>
            <person name="Lacroix C."/>
            <person name="Monsempe C."/>
            <person name="Simon S."/>
            <person name="Harris B."/>
            <person name="Atkin R."/>
            <person name="Doggett J."/>
            <person name="Mayes R."/>
            <person name="Keating L."/>
            <person name="Wheeler P.R."/>
            <person name="Parkhill J."/>
            <person name="Barrell B.G."/>
            <person name="Cole S.T."/>
            <person name="Gordon S.V."/>
            <person name="Hewinson R.G."/>
        </authorList>
    </citation>
    <scope>NUCLEOTIDE SEQUENCE [LARGE SCALE GENOMIC DNA]</scope>
    <source>
        <strain>ATCC BAA-935 / AF2122/97</strain>
    </source>
</reference>
<reference key="2">
    <citation type="journal article" date="2017" name="Genome Announc.">
        <title>Updated reference genome sequence and annotation of Mycobacterium bovis AF2122/97.</title>
        <authorList>
            <person name="Malone K.M."/>
            <person name="Farrell D."/>
            <person name="Stuber T.P."/>
            <person name="Schubert O.T."/>
            <person name="Aebersold R."/>
            <person name="Robbe-Austerman S."/>
            <person name="Gordon S.V."/>
        </authorList>
    </citation>
    <scope>NUCLEOTIDE SEQUENCE [LARGE SCALE GENOMIC DNA]</scope>
    <scope>GENOME REANNOTATION</scope>
    <source>
        <strain>ATCC BAA-935 / AF2122/97</strain>
    </source>
</reference>
<keyword id="KW-1185">Reference proteome</keyword>
<proteinExistence type="predicted"/>
<name>Y1389_MYCBO</name>
<dbReference type="EMBL" id="LT708304">
    <property type="protein sequence ID" value="SIT99992.1"/>
    <property type="molecule type" value="Genomic_DNA"/>
</dbReference>
<dbReference type="RefSeq" id="NP_855043.1">
    <property type="nucleotide sequence ID" value="NC_002945.3"/>
</dbReference>
<dbReference type="RefSeq" id="WP_003898837.1">
    <property type="nucleotide sequence ID" value="NC_002945.4"/>
</dbReference>
<dbReference type="SMR" id="P64826"/>
<dbReference type="KEGG" id="mbo:BQ2027_MB1389C"/>
<dbReference type="PATRIC" id="fig|233413.5.peg.1521"/>
<dbReference type="Proteomes" id="UP000001419">
    <property type="component" value="Chromosome"/>
</dbReference>
<dbReference type="GO" id="GO:0071111">
    <property type="term" value="F:cyclic-guanylate-specific phosphodiesterase activity"/>
    <property type="evidence" value="ECO:0007669"/>
    <property type="project" value="InterPro"/>
</dbReference>
<dbReference type="CDD" id="cd01948">
    <property type="entry name" value="EAL"/>
    <property type="match status" value="1"/>
</dbReference>
<dbReference type="CDD" id="cd01949">
    <property type="entry name" value="GGDEF"/>
    <property type="match status" value="1"/>
</dbReference>
<dbReference type="Gene3D" id="3.30.450.40">
    <property type="match status" value="1"/>
</dbReference>
<dbReference type="Gene3D" id="3.30.70.270">
    <property type="match status" value="1"/>
</dbReference>
<dbReference type="Gene3D" id="3.20.20.450">
    <property type="entry name" value="EAL domain"/>
    <property type="match status" value="1"/>
</dbReference>
<dbReference type="InterPro" id="IPR050706">
    <property type="entry name" value="Cyclic-di-GMP_PDE-like"/>
</dbReference>
<dbReference type="InterPro" id="IPR001633">
    <property type="entry name" value="EAL_dom"/>
</dbReference>
<dbReference type="InterPro" id="IPR035919">
    <property type="entry name" value="EAL_sf"/>
</dbReference>
<dbReference type="InterPro" id="IPR003018">
    <property type="entry name" value="GAF"/>
</dbReference>
<dbReference type="InterPro" id="IPR029016">
    <property type="entry name" value="GAF-like_dom_sf"/>
</dbReference>
<dbReference type="InterPro" id="IPR000160">
    <property type="entry name" value="GGDEF_dom"/>
</dbReference>
<dbReference type="InterPro" id="IPR029787">
    <property type="entry name" value="Nucleotide_cyclase"/>
</dbReference>
<dbReference type="InterPro" id="IPR043128">
    <property type="entry name" value="Rev_trsase/Diguanyl_cyclase"/>
</dbReference>
<dbReference type="NCBIfam" id="TIGR00254">
    <property type="entry name" value="GGDEF"/>
    <property type="match status" value="1"/>
</dbReference>
<dbReference type="PANTHER" id="PTHR33121">
    <property type="entry name" value="CYCLIC DI-GMP PHOSPHODIESTERASE PDEF"/>
    <property type="match status" value="1"/>
</dbReference>
<dbReference type="PANTHER" id="PTHR33121:SF70">
    <property type="entry name" value="SIGNALING PROTEIN YKOW"/>
    <property type="match status" value="1"/>
</dbReference>
<dbReference type="Pfam" id="PF00563">
    <property type="entry name" value="EAL"/>
    <property type="match status" value="1"/>
</dbReference>
<dbReference type="Pfam" id="PF13185">
    <property type="entry name" value="GAF_2"/>
    <property type="match status" value="1"/>
</dbReference>
<dbReference type="Pfam" id="PF00990">
    <property type="entry name" value="GGDEF"/>
    <property type="match status" value="1"/>
</dbReference>
<dbReference type="SMART" id="SM00052">
    <property type="entry name" value="EAL"/>
    <property type="match status" value="1"/>
</dbReference>
<dbReference type="SMART" id="SM00065">
    <property type="entry name" value="GAF"/>
    <property type="match status" value="1"/>
</dbReference>
<dbReference type="SMART" id="SM00267">
    <property type="entry name" value="GGDEF"/>
    <property type="match status" value="1"/>
</dbReference>
<dbReference type="SUPFAM" id="SSF141868">
    <property type="entry name" value="EAL domain-like"/>
    <property type="match status" value="1"/>
</dbReference>
<dbReference type="SUPFAM" id="SSF55781">
    <property type="entry name" value="GAF domain-like"/>
    <property type="match status" value="1"/>
</dbReference>
<dbReference type="SUPFAM" id="SSF55073">
    <property type="entry name" value="Nucleotide cyclase"/>
    <property type="match status" value="1"/>
</dbReference>
<dbReference type="PROSITE" id="PS50883">
    <property type="entry name" value="EAL"/>
    <property type="match status" value="1"/>
</dbReference>
<dbReference type="PROSITE" id="PS50887">
    <property type="entry name" value="GGDEF"/>
    <property type="match status" value="1"/>
</dbReference>
<protein>
    <recommendedName>
        <fullName>Uncharacterized protein Mb1389c</fullName>
    </recommendedName>
</protein>